<keyword id="KW-1185">Reference proteome</keyword>
<keyword id="KW-0687">Ribonucleoprotein</keyword>
<keyword id="KW-0689">Ribosomal protein</keyword>
<organism>
    <name type="scientific">Buchnera aphidicola subsp. Acyrthosiphon pisum (strain APS)</name>
    <name type="common">Acyrthosiphon pisum symbiotic bacterium</name>
    <dbReference type="NCBI Taxonomy" id="107806"/>
    <lineage>
        <taxon>Bacteria</taxon>
        <taxon>Pseudomonadati</taxon>
        <taxon>Pseudomonadota</taxon>
        <taxon>Gammaproteobacteria</taxon>
        <taxon>Enterobacterales</taxon>
        <taxon>Erwiniaceae</taxon>
        <taxon>Buchnera</taxon>
    </lineage>
</organism>
<sequence length="115" mass="13299">MFSIIQNIEKEQIKKNIPVFRSGDTIEVKVWVIEGSKKRLQSFEGIVIAIKNRCLNSSFTVRKISNGEGVERVFQTHSHGIEEILVKRKGLVRKAKLYYLRTRTGKAARIKERLN</sequence>
<evidence type="ECO:0000250" key="1"/>
<evidence type="ECO:0000305" key="2"/>
<proteinExistence type="inferred from homology"/>
<comment type="function">
    <text evidence="1">This protein is located at the 30S-50S ribosomal subunit interface and may play a role in the structure and function of the aminoacyl-tRNA binding site.</text>
</comment>
<comment type="similarity">
    <text evidence="2">Belongs to the bacterial ribosomal protein bL19 family.</text>
</comment>
<name>RL19_BUCAI</name>
<reference key="1">
    <citation type="journal article" date="2000" name="Nature">
        <title>Genome sequence of the endocellular bacterial symbiont of aphids Buchnera sp. APS.</title>
        <authorList>
            <person name="Shigenobu S."/>
            <person name="Watanabe H."/>
            <person name="Hattori M."/>
            <person name="Sakaki Y."/>
            <person name="Ishikawa H."/>
        </authorList>
    </citation>
    <scope>NUCLEOTIDE SEQUENCE [LARGE SCALE GENOMIC DNA]</scope>
    <source>
        <strain>APS</strain>
    </source>
</reference>
<gene>
    <name type="primary">rplS</name>
    <name type="ordered locus">BU397</name>
</gene>
<dbReference type="EMBL" id="BA000003">
    <property type="protein sequence ID" value="BAB13100.1"/>
    <property type="molecule type" value="Genomic_DNA"/>
</dbReference>
<dbReference type="RefSeq" id="NP_240214.1">
    <property type="nucleotide sequence ID" value="NC_002528.1"/>
</dbReference>
<dbReference type="RefSeq" id="WP_010896098.1">
    <property type="nucleotide sequence ID" value="NC_002528.1"/>
</dbReference>
<dbReference type="SMR" id="P57477"/>
<dbReference type="STRING" id="563178.BUAP5A_390"/>
<dbReference type="EnsemblBacteria" id="BAB13100">
    <property type="protein sequence ID" value="BAB13100"/>
    <property type="gene ID" value="BAB13100"/>
</dbReference>
<dbReference type="KEGG" id="buc:BU397"/>
<dbReference type="PATRIC" id="fig|107806.10.peg.411"/>
<dbReference type="eggNOG" id="COG0335">
    <property type="taxonomic scope" value="Bacteria"/>
</dbReference>
<dbReference type="HOGENOM" id="CLU_103507_2_2_6"/>
<dbReference type="Proteomes" id="UP000001806">
    <property type="component" value="Chromosome"/>
</dbReference>
<dbReference type="GO" id="GO:0022625">
    <property type="term" value="C:cytosolic large ribosomal subunit"/>
    <property type="evidence" value="ECO:0007669"/>
    <property type="project" value="TreeGrafter"/>
</dbReference>
<dbReference type="GO" id="GO:0003735">
    <property type="term" value="F:structural constituent of ribosome"/>
    <property type="evidence" value="ECO:0007669"/>
    <property type="project" value="InterPro"/>
</dbReference>
<dbReference type="GO" id="GO:0006412">
    <property type="term" value="P:translation"/>
    <property type="evidence" value="ECO:0007669"/>
    <property type="project" value="UniProtKB-UniRule"/>
</dbReference>
<dbReference type="FunFam" id="2.30.30.790:FF:000001">
    <property type="entry name" value="50S ribosomal protein L19"/>
    <property type="match status" value="1"/>
</dbReference>
<dbReference type="Gene3D" id="2.30.30.790">
    <property type="match status" value="1"/>
</dbReference>
<dbReference type="HAMAP" id="MF_00402">
    <property type="entry name" value="Ribosomal_bL19"/>
    <property type="match status" value="1"/>
</dbReference>
<dbReference type="InterPro" id="IPR001857">
    <property type="entry name" value="Ribosomal_bL19"/>
</dbReference>
<dbReference type="InterPro" id="IPR018257">
    <property type="entry name" value="Ribosomal_bL19_CS"/>
</dbReference>
<dbReference type="InterPro" id="IPR038657">
    <property type="entry name" value="Ribosomal_bL19_sf"/>
</dbReference>
<dbReference type="InterPro" id="IPR008991">
    <property type="entry name" value="Translation_prot_SH3-like_sf"/>
</dbReference>
<dbReference type="NCBIfam" id="TIGR01024">
    <property type="entry name" value="rplS_bact"/>
    <property type="match status" value="1"/>
</dbReference>
<dbReference type="PANTHER" id="PTHR15680:SF9">
    <property type="entry name" value="LARGE RIBOSOMAL SUBUNIT PROTEIN BL19M"/>
    <property type="match status" value="1"/>
</dbReference>
<dbReference type="PANTHER" id="PTHR15680">
    <property type="entry name" value="RIBOSOMAL PROTEIN L19"/>
    <property type="match status" value="1"/>
</dbReference>
<dbReference type="Pfam" id="PF01245">
    <property type="entry name" value="Ribosomal_L19"/>
    <property type="match status" value="1"/>
</dbReference>
<dbReference type="PIRSF" id="PIRSF002191">
    <property type="entry name" value="Ribosomal_L19"/>
    <property type="match status" value="1"/>
</dbReference>
<dbReference type="PRINTS" id="PR00061">
    <property type="entry name" value="RIBOSOMALL19"/>
</dbReference>
<dbReference type="SUPFAM" id="SSF50104">
    <property type="entry name" value="Translation proteins SH3-like domain"/>
    <property type="match status" value="1"/>
</dbReference>
<dbReference type="PROSITE" id="PS01015">
    <property type="entry name" value="RIBOSOMAL_L19"/>
    <property type="match status" value="1"/>
</dbReference>
<protein>
    <recommendedName>
        <fullName evidence="2">Large ribosomal subunit protein bL19</fullName>
    </recommendedName>
    <alternativeName>
        <fullName>50S ribosomal protein L19</fullName>
    </alternativeName>
</protein>
<feature type="chain" id="PRO_0000163426" description="Large ribosomal subunit protein bL19">
    <location>
        <begin position="1"/>
        <end position="115"/>
    </location>
</feature>
<accession>P57477</accession>